<dbReference type="EMBL" id="AE005674">
    <property type="protein sequence ID" value="AAN44609.1"/>
    <property type="molecule type" value="Genomic_DNA"/>
</dbReference>
<dbReference type="EMBL" id="AE014073">
    <property type="protein sequence ID" value="AAP18423.1"/>
    <property type="molecule type" value="Genomic_DNA"/>
</dbReference>
<dbReference type="RefSeq" id="NP_708902.1">
    <property type="nucleotide sequence ID" value="NC_004337.2"/>
</dbReference>
<dbReference type="RefSeq" id="WP_000406488.1">
    <property type="nucleotide sequence ID" value="NZ_WPGW01000077.1"/>
</dbReference>
<dbReference type="SMR" id="P0ACL4"/>
<dbReference type="STRING" id="198214.SF3137"/>
<dbReference type="PaxDb" id="198214-SF3137"/>
<dbReference type="GeneID" id="1026725"/>
<dbReference type="GeneID" id="93778889"/>
<dbReference type="KEGG" id="sfl:SF3137"/>
<dbReference type="KEGG" id="sfx:S3345"/>
<dbReference type="PATRIC" id="fig|198214.7.peg.3724"/>
<dbReference type="HOGENOM" id="CLU_017584_9_5_6"/>
<dbReference type="Proteomes" id="UP000001006">
    <property type="component" value="Chromosome"/>
</dbReference>
<dbReference type="Proteomes" id="UP000002673">
    <property type="component" value="Chromosome"/>
</dbReference>
<dbReference type="GO" id="GO:0003677">
    <property type="term" value="F:DNA binding"/>
    <property type="evidence" value="ECO:0007669"/>
    <property type="project" value="UniProtKB-KW"/>
</dbReference>
<dbReference type="GO" id="GO:0003700">
    <property type="term" value="F:DNA-binding transcription factor activity"/>
    <property type="evidence" value="ECO:0007669"/>
    <property type="project" value="InterPro"/>
</dbReference>
<dbReference type="CDD" id="cd07377">
    <property type="entry name" value="WHTH_GntR"/>
    <property type="match status" value="1"/>
</dbReference>
<dbReference type="FunFam" id="1.10.10.10:FF:000252">
    <property type="entry name" value="Exu regulon transcriptional regulator"/>
    <property type="match status" value="1"/>
</dbReference>
<dbReference type="FunFam" id="1.20.120.530:FF:000002">
    <property type="entry name" value="GntR family transcriptional regulator"/>
    <property type="match status" value="1"/>
</dbReference>
<dbReference type="Gene3D" id="1.20.120.530">
    <property type="entry name" value="GntR ligand-binding domain-like"/>
    <property type="match status" value="1"/>
</dbReference>
<dbReference type="Gene3D" id="1.10.10.10">
    <property type="entry name" value="Winged helix-like DNA-binding domain superfamily/Winged helix DNA-binding domain"/>
    <property type="match status" value="1"/>
</dbReference>
<dbReference type="InterPro" id="IPR011711">
    <property type="entry name" value="GntR_C"/>
</dbReference>
<dbReference type="InterPro" id="IPR008920">
    <property type="entry name" value="TF_FadR/GntR_C"/>
</dbReference>
<dbReference type="InterPro" id="IPR000524">
    <property type="entry name" value="Tscrpt_reg_HTH_GntR"/>
</dbReference>
<dbReference type="InterPro" id="IPR036388">
    <property type="entry name" value="WH-like_DNA-bd_sf"/>
</dbReference>
<dbReference type="InterPro" id="IPR036390">
    <property type="entry name" value="WH_DNA-bd_sf"/>
</dbReference>
<dbReference type="NCBIfam" id="NF008571">
    <property type="entry name" value="PRK11523.1"/>
    <property type="match status" value="1"/>
</dbReference>
<dbReference type="PANTHER" id="PTHR43537:SF7">
    <property type="entry name" value="EXU REGULON TRANSCRIPTIONAL REGULATOR"/>
    <property type="match status" value="1"/>
</dbReference>
<dbReference type="PANTHER" id="PTHR43537">
    <property type="entry name" value="TRANSCRIPTIONAL REGULATOR, GNTR FAMILY"/>
    <property type="match status" value="1"/>
</dbReference>
<dbReference type="Pfam" id="PF07729">
    <property type="entry name" value="FCD"/>
    <property type="match status" value="1"/>
</dbReference>
<dbReference type="Pfam" id="PF00392">
    <property type="entry name" value="GntR"/>
    <property type="match status" value="1"/>
</dbReference>
<dbReference type="PRINTS" id="PR00035">
    <property type="entry name" value="HTHGNTR"/>
</dbReference>
<dbReference type="SMART" id="SM00895">
    <property type="entry name" value="FCD"/>
    <property type="match status" value="1"/>
</dbReference>
<dbReference type="SMART" id="SM00345">
    <property type="entry name" value="HTH_GNTR"/>
    <property type="match status" value="1"/>
</dbReference>
<dbReference type="SUPFAM" id="SSF48008">
    <property type="entry name" value="GntR ligand-binding domain-like"/>
    <property type="match status" value="1"/>
</dbReference>
<dbReference type="SUPFAM" id="SSF46785">
    <property type="entry name" value="Winged helix' DNA-binding domain"/>
    <property type="match status" value="1"/>
</dbReference>
<dbReference type="PROSITE" id="PS50949">
    <property type="entry name" value="HTH_GNTR"/>
    <property type="match status" value="1"/>
</dbReference>
<proteinExistence type="inferred from homology"/>
<reference key="1">
    <citation type="journal article" date="2002" name="Nucleic Acids Res.">
        <title>Genome sequence of Shigella flexneri 2a: insights into pathogenicity through comparison with genomes of Escherichia coli K12 and O157.</title>
        <authorList>
            <person name="Jin Q."/>
            <person name="Yuan Z."/>
            <person name="Xu J."/>
            <person name="Wang Y."/>
            <person name="Shen Y."/>
            <person name="Lu W."/>
            <person name="Wang J."/>
            <person name="Liu H."/>
            <person name="Yang J."/>
            <person name="Yang F."/>
            <person name="Zhang X."/>
            <person name="Zhang J."/>
            <person name="Yang G."/>
            <person name="Wu H."/>
            <person name="Qu D."/>
            <person name="Dong J."/>
            <person name="Sun L."/>
            <person name="Xue Y."/>
            <person name="Zhao A."/>
            <person name="Gao Y."/>
            <person name="Zhu J."/>
            <person name="Kan B."/>
            <person name="Ding K."/>
            <person name="Chen S."/>
            <person name="Cheng H."/>
            <person name="Yao Z."/>
            <person name="He B."/>
            <person name="Chen R."/>
            <person name="Ma D."/>
            <person name="Qiang B."/>
            <person name="Wen Y."/>
            <person name="Hou Y."/>
            <person name="Yu J."/>
        </authorList>
    </citation>
    <scope>NUCLEOTIDE SEQUENCE [LARGE SCALE GENOMIC DNA]</scope>
    <source>
        <strain>301 / Serotype 2a</strain>
    </source>
</reference>
<reference key="2">
    <citation type="journal article" date="2003" name="Infect. Immun.">
        <title>Complete genome sequence and comparative genomics of Shigella flexneri serotype 2a strain 2457T.</title>
        <authorList>
            <person name="Wei J."/>
            <person name="Goldberg M.B."/>
            <person name="Burland V."/>
            <person name="Venkatesan M.M."/>
            <person name="Deng W."/>
            <person name="Fournier G."/>
            <person name="Mayhew G.F."/>
            <person name="Plunkett G. III"/>
            <person name="Rose D.J."/>
            <person name="Darling A."/>
            <person name="Mau B."/>
            <person name="Perna N.T."/>
            <person name="Payne S.M."/>
            <person name="Runyen-Janecky L.J."/>
            <person name="Zhou S."/>
            <person name="Schwartz D.C."/>
            <person name="Blattner F.R."/>
        </authorList>
    </citation>
    <scope>NUCLEOTIDE SEQUENCE [LARGE SCALE GENOMIC DNA]</scope>
    <source>
        <strain>ATCC 700930 / 2457T / Serotype 2a</strain>
    </source>
</reference>
<evidence type="ECO:0000250" key="1"/>
<evidence type="ECO:0000255" key="2">
    <source>
        <dbReference type="PROSITE-ProRule" id="PRU00307"/>
    </source>
</evidence>
<sequence>MEITEPRRLYQQLAADLKERIEQGVYLVGDKLPAERFIADEKNVSRTVVREAIIMLEVEGYVEVRKGSGIHVVSNQPRHQQAADNNMEFANYGPFELLQARQLIESNIAEFAATQVTKQDIMKLMAIQEQARGEQCFRDSEWDLQFHIQVALATQNSALAAIVEKMWTQRSHNPYWKKLHEHIDSRTVDNWCDDHDQILKALIRKDPHAAKLAMWQHLENTKIMLFNETSDDFEFNADRYLFAENPVVHLDTATSGSK</sequence>
<name>EXUR_SHIFL</name>
<comment type="function">
    <text evidence="1">Repressor for the exu regulon that encode genes involved in hexuronate utilization. It regulates the ExuT, UxaCA and UxuRAB operons. Binds D-tagaturonate and D-fructuronate as inducers (By similarity).</text>
</comment>
<protein>
    <recommendedName>
        <fullName>Exu regulon transcriptional regulator</fullName>
    </recommendedName>
</protein>
<accession>P0ACL4</accession>
<accession>P42608</accession>
<accession>P76665</accession>
<accession>Q8X4Y9</accession>
<organism>
    <name type="scientific">Shigella flexneri</name>
    <dbReference type="NCBI Taxonomy" id="623"/>
    <lineage>
        <taxon>Bacteria</taxon>
        <taxon>Pseudomonadati</taxon>
        <taxon>Pseudomonadota</taxon>
        <taxon>Gammaproteobacteria</taxon>
        <taxon>Enterobacterales</taxon>
        <taxon>Enterobacteriaceae</taxon>
        <taxon>Shigella</taxon>
    </lineage>
</organism>
<feature type="chain" id="PRO_0000050624" description="Exu regulon transcriptional regulator">
    <location>
        <begin position="1"/>
        <end position="258"/>
    </location>
</feature>
<feature type="domain" description="HTH gntR-type" evidence="2">
    <location>
        <begin position="7"/>
        <end position="75"/>
    </location>
</feature>
<feature type="DNA-binding region" description="H-T-H motif" evidence="2">
    <location>
        <begin position="35"/>
        <end position="54"/>
    </location>
</feature>
<gene>
    <name type="primary">exuR</name>
    <name type="ordered locus">SF3137</name>
    <name type="ordered locus">S3345</name>
</gene>
<keyword id="KW-0238">DNA-binding</keyword>
<keyword id="KW-1185">Reference proteome</keyword>
<keyword id="KW-0678">Repressor</keyword>
<keyword id="KW-0804">Transcription</keyword>
<keyword id="KW-0805">Transcription regulation</keyword>